<gene>
    <name evidence="4" type="primary">CENPVL1</name>
    <name evidence="4" type="synonym">CENPVP1</name>
</gene>
<accession>A0A0U1RR11</accession>
<accession>Q3ZM64</accession>
<sequence>MGRVRNRATAQRRRRKRPGDPPAACAAIAVTGASRAQCPRVQVGVGSHAAAKRWLGRWRRKRRWRRVRKAGPRDLLPSAPTPDPPGPAPSPKDLDLGAQRERWETFRKLRGLSCEGAAKVLLDTFEYPGLVHHTGGCHCGAVRFAVWAPADLRVVDCSCRLCRKKQHRHFLVPASRFTLLQGAESIVTYRSNTHPALHSFCSRCGVQSFHAAVSDPRVYGVAPHCLDEGTVRSVVIEEVGGGDPGEEAAEEHKAIHKTSSQSAPACPREQEQ</sequence>
<keyword id="KW-0479">Metal-binding</keyword>
<keyword id="KW-1185">Reference proteome</keyword>
<keyword id="KW-0862">Zinc</keyword>
<organism>
    <name type="scientific">Homo sapiens</name>
    <name type="common">Human</name>
    <dbReference type="NCBI Taxonomy" id="9606"/>
    <lineage>
        <taxon>Eukaryota</taxon>
        <taxon>Metazoa</taxon>
        <taxon>Chordata</taxon>
        <taxon>Craniata</taxon>
        <taxon>Vertebrata</taxon>
        <taxon>Euteleostomi</taxon>
        <taxon>Mammalia</taxon>
        <taxon>Eutheria</taxon>
        <taxon>Euarchontoglires</taxon>
        <taxon>Primates</taxon>
        <taxon>Haplorrhini</taxon>
        <taxon>Catarrhini</taxon>
        <taxon>Hominidae</taxon>
        <taxon>Homo</taxon>
    </lineage>
</organism>
<evidence type="ECO:0000255" key="1">
    <source>
        <dbReference type="PROSITE-ProRule" id="PRU01239"/>
    </source>
</evidence>
<evidence type="ECO:0000256" key="2">
    <source>
        <dbReference type="SAM" id="MobiDB-lite"/>
    </source>
</evidence>
<evidence type="ECO:0000305" key="3"/>
<evidence type="ECO:0000312" key="4">
    <source>
        <dbReference type="HGNC" id="HGNC:31851"/>
    </source>
</evidence>
<comment type="cofactor">
    <cofactor evidence="1">
        <name>Zn(2+)</name>
        <dbReference type="ChEBI" id="CHEBI:29105"/>
    </cofactor>
    <text evidence="1">Binds 2 Zn(2+) ions per subunit.</text>
</comment>
<comment type="similarity">
    <text evidence="3">Belongs to the Gfa family.</text>
</comment>
<name>CENL1_HUMAN</name>
<protein>
    <recommendedName>
        <fullName evidence="3">Centromere protein V-like protein 1</fullName>
    </recommendedName>
    <alternativeName>
        <fullName evidence="4">Centromere protein V pseudogene 1</fullName>
    </alternativeName>
</protein>
<feature type="chain" id="PRO_0000444697" description="Centromere protein V-like protein 1">
    <location>
        <begin position="1"/>
        <end position="272"/>
    </location>
</feature>
<feature type="domain" description="CENP-V/GFA" evidence="1">
    <location>
        <begin position="133"/>
        <end position="246"/>
    </location>
</feature>
<feature type="region of interest" description="Disordered" evidence="2">
    <location>
        <begin position="1"/>
        <end position="23"/>
    </location>
</feature>
<feature type="region of interest" description="Disordered" evidence="2">
    <location>
        <begin position="65"/>
        <end position="95"/>
    </location>
</feature>
<feature type="region of interest" description="Disordered" evidence="2">
    <location>
        <begin position="240"/>
        <end position="272"/>
    </location>
</feature>
<feature type="compositionally biased region" description="Basic residues" evidence="2">
    <location>
        <begin position="1"/>
        <end position="17"/>
    </location>
</feature>
<feature type="compositionally biased region" description="Pro residues" evidence="2">
    <location>
        <begin position="79"/>
        <end position="90"/>
    </location>
</feature>
<feature type="binding site" evidence="1">
    <location>
        <position position="137"/>
    </location>
    <ligand>
        <name>Zn(2+)</name>
        <dbReference type="ChEBI" id="CHEBI:29105"/>
        <label>1</label>
        <note>structural</note>
    </ligand>
</feature>
<feature type="binding site" evidence="1">
    <location>
        <position position="139"/>
    </location>
    <ligand>
        <name>Zn(2+)</name>
        <dbReference type="ChEBI" id="CHEBI:29105"/>
        <label>1</label>
        <note>structural</note>
    </ligand>
</feature>
<feature type="binding site" evidence="1">
    <location>
        <position position="157"/>
    </location>
    <ligand>
        <name>Zn(2+)</name>
        <dbReference type="ChEBI" id="CHEBI:29105"/>
        <label>2</label>
        <note>catalytic</note>
    </ligand>
</feature>
<feature type="binding site" evidence="1">
    <location>
        <position position="159"/>
    </location>
    <ligand>
        <name>Zn(2+)</name>
        <dbReference type="ChEBI" id="CHEBI:29105"/>
        <label>2</label>
        <note>catalytic</note>
    </ligand>
</feature>
<feature type="binding site" evidence="1">
    <location>
        <position position="162"/>
    </location>
    <ligand>
        <name>Zn(2+)</name>
        <dbReference type="ChEBI" id="CHEBI:29105"/>
        <label>2</label>
        <note>catalytic</note>
    </ligand>
</feature>
<feature type="binding site" evidence="1">
    <location>
        <position position="201"/>
    </location>
    <ligand>
        <name>Zn(2+)</name>
        <dbReference type="ChEBI" id="CHEBI:29105"/>
        <label>1</label>
        <note>structural</note>
    </ligand>
</feature>
<feature type="binding site" evidence="1">
    <location>
        <position position="204"/>
    </location>
    <ligand>
        <name>Zn(2+)</name>
        <dbReference type="ChEBI" id="CHEBI:29105"/>
        <label>1</label>
        <note>structural</note>
    </ligand>
</feature>
<dbReference type="EMBL" id="AC234030">
    <property type="status" value="NOT_ANNOTATED_CDS"/>
    <property type="molecule type" value="Genomic_DNA"/>
</dbReference>
<dbReference type="EMBL" id="AY730278">
    <property type="protein sequence ID" value="AAW56972.1"/>
    <property type="molecule type" value="mRNA"/>
</dbReference>
<dbReference type="CCDS" id="CCDS87745.1"/>
<dbReference type="RefSeq" id="NP_001342206.1">
    <property type="nucleotide sequence ID" value="NM_001355277.1"/>
</dbReference>
<dbReference type="SMR" id="A0A0U1RR11"/>
<dbReference type="STRING" id="9606.ENSP00000489273"/>
<dbReference type="GlyGen" id="A0A0U1RR11">
    <property type="glycosylation" value="1 site"/>
</dbReference>
<dbReference type="BioMuta" id="CENPVL1"/>
<dbReference type="jPOST" id="A0A0U1RR11"/>
<dbReference type="MassIVE" id="A0A0U1RR11"/>
<dbReference type="Pumba" id="A0A0U1RR11"/>
<dbReference type="Antibodypedia" id="78259">
    <property type="antibodies" value="1 antibodies from 1 providers"/>
</dbReference>
<dbReference type="Ensembl" id="ENST00000602548.2">
    <property type="protein sequence ID" value="ENSP00000489273.1"/>
    <property type="gene ID" value="ENSG00000223591.5"/>
</dbReference>
<dbReference type="GeneID" id="389857"/>
<dbReference type="MANE-Select" id="ENST00000602548.2">
    <property type="protein sequence ID" value="ENSP00000489273.1"/>
    <property type="RefSeq nucleotide sequence ID" value="NM_001355277.1"/>
    <property type="RefSeq protein sequence ID" value="NP_001342206.1"/>
</dbReference>
<dbReference type="AGR" id="HGNC:31851"/>
<dbReference type="GeneCards" id="CENPVL1"/>
<dbReference type="HGNC" id="HGNC:31851">
    <property type="gene designation" value="CENPVL1"/>
</dbReference>
<dbReference type="HPA" id="ENSG00000223591">
    <property type="expression patterns" value="Group enriched (brain, testis)"/>
</dbReference>
<dbReference type="neXtProt" id="NX_A0A0U1RR11"/>
<dbReference type="OpenTargets" id="ENSG00000223591"/>
<dbReference type="VEuPathDB" id="HostDB:ENSG00000223591"/>
<dbReference type="InParanoid" id="A0A0U1RR11"/>
<dbReference type="OMA" id="FHAAPRV"/>
<dbReference type="OrthoDB" id="10015082at2759"/>
<dbReference type="PAN-GO" id="A0A0U1RR11">
    <property type="GO annotations" value="0 GO annotations based on evolutionary models"/>
</dbReference>
<dbReference type="Pharos" id="A0A0U1RR11">
    <property type="development level" value="Tdark"/>
</dbReference>
<dbReference type="PRO" id="PR:A0A0U1RR11"/>
<dbReference type="Proteomes" id="UP000005640">
    <property type="component" value="Chromosome X"/>
</dbReference>
<dbReference type="RNAct" id="A0A0U1RR11">
    <property type="molecule type" value="protein"/>
</dbReference>
<dbReference type="Bgee" id="ENSG00000223591">
    <property type="expression patterns" value="Expressed in cortical plate and 19 other cell types or tissues"/>
</dbReference>
<dbReference type="GO" id="GO:0016846">
    <property type="term" value="F:carbon-sulfur lyase activity"/>
    <property type="evidence" value="ECO:0007669"/>
    <property type="project" value="InterPro"/>
</dbReference>
<dbReference type="GO" id="GO:0046872">
    <property type="term" value="F:metal ion binding"/>
    <property type="evidence" value="ECO:0007669"/>
    <property type="project" value="UniProtKB-KW"/>
</dbReference>
<dbReference type="Gene3D" id="2.170.150.70">
    <property type="match status" value="1"/>
</dbReference>
<dbReference type="InterPro" id="IPR052355">
    <property type="entry name" value="CENP-V-like"/>
</dbReference>
<dbReference type="InterPro" id="IPR006913">
    <property type="entry name" value="CENP-V/GFA"/>
</dbReference>
<dbReference type="InterPro" id="IPR011057">
    <property type="entry name" value="Mss4-like_sf"/>
</dbReference>
<dbReference type="PANTHER" id="PTHR28620">
    <property type="entry name" value="CENTROMERE PROTEIN V"/>
    <property type="match status" value="1"/>
</dbReference>
<dbReference type="PANTHER" id="PTHR28620:SF7">
    <property type="entry name" value="CENTROMERE PROTEIN V-LIKE PROTEIN 3"/>
    <property type="match status" value="1"/>
</dbReference>
<dbReference type="Pfam" id="PF04828">
    <property type="entry name" value="GFA"/>
    <property type="match status" value="1"/>
</dbReference>
<dbReference type="SUPFAM" id="SSF51316">
    <property type="entry name" value="Mss4-like"/>
    <property type="match status" value="1"/>
</dbReference>
<dbReference type="PROSITE" id="PS51891">
    <property type="entry name" value="CENP_V_GFA"/>
    <property type="match status" value="1"/>
</dbReference>
<reference key="1">
    <citation type="journal article" date="2005" name="Nature">
        <title>The DNA sequence of the human X chromosome.</title>
        <authorList>
            <person name="Ross M.T."/>
            <person name="Grafham D.V."/>
            <person name="Coffey A.J."/>
            <person name="Scherer S."/>
            <person name="McLay K."/>
            <person name="Muzny D."/>
            <person name="Platzer M."/>
            <person name="Howell G.R."/>
            <person name="Burrows C."/>
            <person name="Bird C.P."/>
            <person name="Frankish A."/>
            <person name="Lovell F.L."/>
            <person name="Howe K.L."/>
            <person name="Ashurst J.L."/>
            <person name="Fulton R.S."/>
            <person name="Sudbrak R."/>
            <person name="Wen G."/>
            <person name="Jones M.C."/>
            <person name="Hurles M.E."/>
            <person name="Andrews T.D."/>
            <person name="Scott C.E."/>
            <person name="Searle S."/>
            <person name="Ramser J."/>
            <person name="Whittaker A."/>
            <person name="Deadman R."/>
            <person name="Carter N.P."/>
            <person name="Hunt S.E."/>
            <person name="Chen R."/>
            <person name="Cree A."/>
            <person name="Gunaratne P."/>
            <person name="Havlak P."/>
            <person name="Hodgson A."/>
            <person name="Metzker M.L."/>
            <person name="Richards S."/>
            <person name="Scott G."/>
            <person name="Steffen D."/>
            <person name="Sodergren E."/>
            <person name="Wheeler D.A."/>
            <person name="Worley K.C."/>
            <person name="Ainscough R."/>
            <person name="Ambrose K.D."/>
            <person name="Ansari-Lari M.A."/>
            <person name="Aradhya S."/>
            <person name="Ashwell R.I."/>
            <person name="Babbage A.K."/>
            <person name="Bagguley C.L."/>
            <person name="Ballabio A."/>
            <person name="Banerjee R."/>
            <person name="Barker G.E."/>
            <person name="Barlow K.F."/>
            <person name="Barrett I.P."/>
            <person name="Bates K.N."/>
            <person name="Beare D.M."/>
            <person name="Beasley H."/>
            <person name="Beasley O."/>
            <person name="Beck A."/>
            <person name="Bethel G."/>
            <person name="Blechschmidt K."/>
            <person name="Brady N."/>
            <person name="Bray-Allen S."/>
            <person name="Bridgeman A.M."/>
            <person name="Brown A.J."/>
            <person name="Brown M.J."/>
            <person name="Bonnin D."/>
            <person name="Bruford E.A."/>
            <person name="Buhay C."/>
            <person name="Burch P."/>
            <person name="Burford D."/>
            <person name="Burgess J."/>
            <person name="Burrill W."/>
            <person name="Burton J."/>
            <person name="Bye J.M."/>
            <person name="Carder C."/>
            <person name="Carrel L."/>
            <person name="Chako J."/>
            <person name="Chapman J.C."/>
            <person name="Chavez D."/>
            <person name="Chen E."/>
            <person name="Chen G."/>
            <person name="Chen Y."/>
            <person name="Chen Z."/>
            <person name="Chinault C."/>
            <person name="Ciccodicola A."/>
            <person name="Clark S.Y."/>
            <person name="Clarke G."/>
            <person name="Clee C.M."/>
            <person name="Clegg S."/>
            <person name="Clerc-Blankenburg K."/>
            <person name="Clifford K."/>
            <person name="Cobley V."/>
            <person name="Cole C.G."/>
            <person name="Conquer J.S."/>
            <person name="Corby N."/>
            <person name="Connor R.E."/>
            <person name="David R."/>
            <person name="Davies J."/>
            <person name="Davis C."/>
            <person name="Davis J."/>
            <person name="Delgado O."/>
            <person name="Deshazo D."/>
            <person name="Dhami P."/>
            <person name="Ding Y."/>
            <person name="Dinh H."/>
            <person name="Dodsworth S."/>
            <person name="Draper H."/>
            <person name="Dugan-Rocha S."/>
            <person name="Dunham A."/>
            <person name="Dunn M."/>
            <person name="Durbin K.J."/>
            <person name="Dutta I."/>
            <person name="Eades T."/>
            <person name="Ellwood M."/>
            <person name="Emery-Cohen A."/>
            <person name="Errington H."/>
            <person name="Evans K.L."/>
            <person name="Faulkner L."/>
            <person name="Francis F."/>
            <person name="Frankland J."/>
            <person name="Fraser A.E."/>
            <person name="Galgoczy P."/>
            <person name="Gilbert J."/>
            <person name="Gill R."/>
            <person name="Gloeckner G."/>
            <person name="Gregory S.G."/>
            <person name="Gribble S."/>
            <person name="Griffiths C."/>
            <person name="Grocock R."/>
            <person name="Gu Y."/>
            <person name="Gwilliam R."/>
            <person name="Hamilton C."/>
            <person name="Hart E.A."/>
            <person name="Hawes A."/>
            <person name="Heath P.D."/>
            <person name="Heitmann K."/>
            <person name="Hennig S."/>
            <person name="Hernandez J."/>
            <person name="Hinzmann B."/>
            <person name="Ho S."/>
            <person name="Hoffs M."/>
            <person name="Howden P.J."/>
            <person name="Huckle E.J."/>
            <person name="Hume J."/>
            <person name="Hunt P.J."/>
            <person name="Hunt A.R."/>
            <person name="Isherwood J."/>
            <person name="Jacob L."/>
            <person name="Johnson D."/>
            <person name="Jones S."/>
            <person name="de Jong P.J."/>
            <person name="Joseph S.S."/>
            <person name="Keenan S."/>
            <person name="Kelly S."/>
            <person name="Kershaw J.K."/>
            <person name="Khan Z."/>
            <person name="Kioschis P."/>
            <person name="Klages S."/>
            <person name="Knights A.J."/>
            <person name="Kosiura A."/>
            <person name="Kovar-Smith C."/>
            <person name="Laird G.K."/>
            <person name="Langford C."/>
            <person name="Lawlor S."/>
            <person name="Leversha M."/>
            <person name="Lewis L."/>
            <person name="Liu W."/>
            <person name="Lloyd C."/>
            <person name="Lloyd D.M."/>
            <person name="Loulseged H."/>
            <person name="Loveland J.E."/>
            <person name="Lovell J.D."/>
            <person name="Lozado R."/>
            <person name="Lu J."/>
            <person name="Lyne R."/>
            <person name="Ma J."/>
            <person name="Maheshwari M."/>
            <person name="Matthews L.H."/>
            <person name="McDowall J."/>
            <person name="McLaren S."/>
            <person name="McMurray A."/>
            <person name="Meidl P."/>
            <person name="Meitinger T."/>
            <person name="Milne S."/>
            <person name="Miner G."/>
            <person name="Mistry S.L."/>
            <person name="Morgan M."/>
            <person name="Morris S."/>
            <person name="Mueller I."/>
            <person name="Mullikin J.C."/>
            <person name="Nguyen N."/>
            <person name="Nordsiek G."/>
            <person name="Nyakatura G."/>
            <person name="O'dell C.N."/>
            <person name="Okwuonu G."/>
            <person name="Palmer S."/>
            <person name="Pandian R."/>
            <person name="Parker D."/>
            <person name="Parrish J."/>
            <person name="Pasternak S."/>
            <person name="Patel D."/>
            <person name="Pearce A.V."/>
            <person name="Pearson D.M."/>
            <person name="Pelan S.E."/>
            <person name="Perez L."/>
            <person name="Porter K.M."/>
            <person name="Ramsey Y."/>
            <person name="Reichwald K."/>
            <person name="Rhodes S."/>
            <person name="Ridler K.A."/>
            <person name="Schlessinger D."/>
            <person name="Schueler M.G."/>
            <person name="Sehra H.K."/>
            <person name="Shaw-Smith C."/>
            <person name="Shen H."/>
            <person name="Sheridan E.M."/>
            <person name="Shownkeen R."/>
            <person name="Skuce C.D."/>
            <person name="Smith M.L."/>
            <person name="Sotheran E.C."/>
            <person name="Steingruber H.E."/>
            <person name="Steward C.A."/>
            <person name="Storey R."/>
            <person name="Swann R.M."/>
            <person name="Swarbreck D."/>
            <person name="Tabor P.E."/>
            <person name="Taudien S."/>
            <person name="Taylor T."/>
            <person name="Teague B."/>
            <person name="Thomas K."/>
            <person name="Thorpe A."/>
            <person name="Timms K."/>
            <person name="Tracey A."/>
            <person name="Trevanion S."/>
            <person name="Tromans A.C."/>
            <person name="d'Urso M."/>
            <person name="Verduzco D."/>
            <person name="Villasana D."/>
            <person name="Waldron L."/>
            <person name="Wall M."/>
            <person name="Wang Q."/>
            <person name="Warren J."/>
            <person name="Warry G.L."/>
            <person name="Wei X."/>
            <person name="West A."/>
            <person name="Whitehead S.L."/>
            <person name="Whiteley M.N."/>
            <person name="Wilkinson J.E."/>
            <person name="Willey D.L."/>
            <person name="Williams G."/>
            <person name="Williams L."/>
            <person name="Williamson A."/>
            <person name="Williamson H."/>
            <person name="Wilming L."/>
            <person name="Woodmansey R.L."/>
            <person name="Wray P.W."/>
            <person name="Yen J."/>
            <person name="Zhang J."/>
            <person name="Zhou J."/>
            <person name="Zoghbi H."/>
            <person name="Zorilla S."/>
            <person name="Buck D."/>
            <person name="Reinhardt R."/>
            <person name="Poustka A."/>
            <person name="Rosenthal A."/>
            <person name="Lehrach H."/>
            <person name="Meindl A."/>
            <person name="Minx P.J."/>
            <person name="Hillier L.W."/>
            <person name="Willard H.F."/>
            <person name="Wilson R.K."/>
            <person name="Waterston R.H."/>
            <person name="Rice C.M."/>
            <person name="Vaudin M."/>
            <person name="Coulson A."/>
            <person name="Nelson D.L."/>
            <person name="Weinstock G."/>
            <person name="Sulston J.E."/>
            <person name="Durbin R.M."/>
            <person name="Hubbard T."/>
            <person name="Gibbs R.A."/>
            <person name="Beck S."/>
            <person name="Rogers J."/>
            <person name="Bentley D.R."/>
        </authorList>
    </citation>
    <scope>NUCLEOTIDE SEQUENCE [LARGE SCALE GENOMIC DNA]</scope>
</reference>
<reference key="2">
    <citation type="submission" date="2004-08" db="EMBL/GenBank/DDBJ databases">
        <title>Palindromes on the human X chromosome.</title>
        <authorList>
            <person name="Saionz J.R."/>
            <person name="Skaletsky H."/>
            <person name="Rozen S."/>
            <person name="Page D.C."/>
        </authorList>
    </citation>
    <scope>NUCLEOTIDE SEQUENCE [MRNA] OF 107-272</scope>
</reference>
<proteinExistence type="evidence at transcript level"/>